<gene>
    <name evidence="1" type="primary">rplV</name>
    <name type="ordered locus">ZMO0521</name>
</gene>
<dbReference type="EMBL" id="AE008692">
    <property type="protein sequence ID" value="AAV89145.1"/>
    <property type="molecule type" value="Genomic_DNA"/>
</dbReference>
<dbReference type="RefSeq" id="WP_011240428.1">
    <property type="nucleotide sequence ID" value="NZ_CP035711.1"/>
</dbReference>
<dbReference type="SMR" id="Q5NQ60"/>
<dbReference type="STRING" id="264203.ZMO0521"/>
<dbReference type="GeneID" id="79904287"/>
<dbReference type="KEGG" id="zmo:ZMO0521"/>
<dbReference type="eggNOG" id="COG0091">
    <property type="taxonomic scope" value="Bacteria"/>
</dbReference>
<dbReference type="HOGENOM" id="CLU_083987_3_0_5"/>
<dbReference type="Proteomes" id="UP000001173">
    <property type="component" value="Chromosome"/>
</dbReference>
<dbReference type="GO" id="GO:0022625">
    <property type="term" value="C:cytosolic large ribosomal subunit"/>
    <property type="evidence" value="ECO:0007669"/>
    <property type="project" value="TreeGrafter"/>
</dbReference>
<dbReference type="GO" id="GO:0019843">
    <property type="term" value="F:rRNA binding"/>
    <property type="evidence" value="ECO:0007669"/>
    <property type="project" value="UniProtKB-UniRule"/>
</dbReference>
<dbReference type="GO" id="GO:0003735">
    <property type="term" value="F:structural constituent of ribosome"/>
    <property type="evidence" value="ECO:0007669"/>
    <property type="project" value="InterPro"/>
</dbReference>
<dbReference type="GO" id="GO:0006412">
    <property type="term" value="P:translation"/>
    <property type="evidence" value="ECO:0007669"/>
    <property type="project" value="UniProtKB-UniRule"/>
</dbReference>
<dbReference type="CDD" id="cd00336">
    <property type="entry name" value="Ribosomal_L22"/>
    <property type="match status" value="1"/>
</dbReference>
<dbReference type="Gene3D" id="3.90.470.10">
    <property type="entry name" value="Ribosomal protein L22/L17"/>
    <property type="match status" value="1"/>
</dbReference>
<dbReference type="HAMAP" id="MF_01331_B">
    <property type="entry name" value="Ribosomal_uL22_B"/>
    <property type="match status" value="1"/>
</dbReference>
<dbReference type="InterPro" id="IPR001063">
    <property type="entry name" value="Ribosomal_uL22"/>
</dbReference>
<dbReference type="InterPro" id="IPR005727">
    <property type="entry name" value="Ribosomal_uL22_bac/chlpt-type"/>
</dbReference>
<dbReference type="InterPro" id="IPR047867">
    <property type="entry name" value="Ribosomal_uL22_bac/org-type"/>
</dbReference>
<dbReference type="InterPro" id="IPR036394">
    <property type="entry name" value="Ribosomal_uL22_sf"/>
</dbReference>
<dbReference type="NCBIfam" id="TIGR01044">
    <property type="entry name" value="rplV_bact"/>
    <property type="match status" value="1"/>
</dbReference>
<dbReference type="PANTHER" id="PTHR13501">
    <property type="entry name" value="CHLOROPLAST 50S RIBOSOMAL PROTEIN L22-RELATED"/>
    <property type="match status" value="1"/>
</dbReference>
<dbReference type="PANTHER" id="PTHR13501:SF8">
    <property type="entry name" value="LARGE RIBOSOMAL SUBUNIT PROTEIN UL22M"/>
    <property type="match status" value="1"/>
</dbReference>
<dbReference type="Pfam" id="PF00237">
    <property type="entry name" value="Ribosomal_L22"/>
    <property type="match status" value="1"/>
</dbReference>
<dbReference type="SUPFAM" id="SSF54843">
    <property type="entry name" value="Ribosomal protein L22"/>
    <property type="match status" value="1"/>
</dbReference>
<protein>
    <recommendedName>
        <fullName evidence="1">Large ribosomal subunit protein uL22</fullName>
    </recommendedName>
    <alternativeName>
        <fullName evidence="2">50S ribosomal protein L22</fullName>
    </alternativeName>
</protein>
<accession>Q5NQ60</accession>
<feature type="chain" id="PRO_0000243233" description="Large ribosomal subunit protein uL22">
    <location>
        <begin position="1"/>
        <end position="126"/>
    </location>
</feature>
<sequence>MSKPQAPRRVGEKEALAVATTVRGSSYKLNLVAGLIRGKKAGEALNILSFSKKAMAKDVRKVLASAIANAENNHNLDVDALIVKEASVGKSIVMKRFATRARGRSTQIIKPFSRIRVVVREQEEAE</sequence>
<comment type="function">
    <text evidence="1">This protein binds specifically to 23S rRNA; its binding is stimulated by other ribosomal proteins, e.g. L4, L17, and L20. It is important during the early stages of 50S assembly. It makes multiple contacts with different domains of the 23S rRNA in the assembled 50S subunit and ribosome (By similarity).</text>
</comment>
<comment type="function">
    <text evidence="1">The globular domain of the protein is located near the polypeptide exit tunnel on the outside of the subunit, while an extended beta-hairpin is found that lines the wall of the exit tunnel in the center of the 70S ribosome.</text>
</comment>
<comment type="subunit">
    <text evidence="1">Part of the 50S ribosomal subunit.</text>
</comment>
<comment type="similarity">
    <text evidence="1">Belongs to the universal ribosomal protein uL22 family.</text>
</comment>
<name>RL22_ZYMMO</name>
<evidence type="ECO:0000255" key="1">
    <source>
        <dbReference type="HAMAP-Rule" id="MF_01331"/>
    </source>
</evidence>
<evidence type="ECO:0000305" key="2"/>
<reference key="1">
    <citation type="journal article" date="2005" name="Nat. Biotechnol.">
        <title>The genome sequence of the ethanologenic bacterium Zymomonas mobilis ZM4.</title>
        <authorList>
            <person name="Seo J.-S."/>
            <person name="Chong H."/>
            <person name="Park H.S."/>
            <person name="Yoon K.-O."/>
            <person name="Jung C."/>
            <person name="Kim J.J."/>
            <person name="Hong J.H."/>
            <person name="Kim H."/>
            <person name="Kim J.-H."/>
            <person name="Kil J.-I."/>
            <person name="Park C.J."/>
            <person name="Oh H.-M."/>
            <person name="Lee J.-S."/>
            <person name="Jin S.-J."/>
            <person name="Um H.-W."/>
            <person name="Lee H.-J."/>
            <person name="Oh S.-J."/>
            <person name="Kim J.Y."/>
            <person name="Kang H.L."/>
            <person name="Lee S.Y."/>
            <person name="Lee K.J."/>
            <person name="Kang H.S."/>
        </authorList>
    </citation>
    <scope>NUCLEOTIDE SEQUENCE [LARGE SCALE GENOMIC DNA]</scope>
    <source>
        <strain>ATCC 31821 / ZM4 / CP4</strain>
    </source>
</reference>
<proteinExistence type="inferred from homology"/>
<organism>
    <name type="scientific">Zymomonas mobilis subsp. mobilis (strain ATCC 31821 / ZM4 / CP4)</name>
    <dbReference type="NCBI Taxonomy" id="264203"/>
    <lineage>
        <taxon>Bacteria</taxon>
        <taxon>Pseudomonadati</taxon>
        <taxon>Pseudomonadota</taxon>
        <taxon>Alphaproteobacteria</taxon>
        <taxon>Sphingomonadales</taxon>
        <taxon>Zymomonadaceae</taxon>
        <taxon>Zymomonas</taxon>
    </lineage>
</organism>
<keyword id="KW-1185">Reference proteome</keyword>
<keyword id="KW-0687">Ribonucleoprotein</keyword>
<keyword id="KW-0689">Ribosomal protein</keyword>
<keyword id="KW-0694">RNA-binding</keyword>
<keyword id="KW-0699">rRNA-binding</keyword>